<evidence type="ECO:0000250" key="1">
    <source>
        <dbReference type="UniProtKB" id="P16036"/>
    </source>
</evidence>
<evidence type="ECO:0000250" key="2">
    <source>
        <dbReference type="UniProtKB" id="Q00325"/>
    </source>
</evidence>
<evidence type="ECO:0000250" key="3">
    <source>
        <dbReference type="UniProtKB" id="Q8VEM8"/>
    </source>
</evidence>
<evidence type="ECO:0000255" key="4"/>
<evidence type="ECO:0000269" key="5">
    <source>
    </source>
</evidence>
<evidence type="ECO:0000269" key="6">
    <source>
    </source>
</evidence>
<evidence type="ECO:0000269" key="7">
    <source>
    </source>
</evidence>
<evidence type="ECO:0000303" key="8">
    <source>
    </source>
</evidence>
<evidence type="ECO:0000303" key="9">
    <source ref="3"/>
</evidence>
<evidence type="ECO:0000305" key="10"/>
<evidence type="ECO:0000305" key="11">
    <source>
    </source>
</evidence>
<proteinExistence type="evidence at protein level"/>
<keyword id="KW-0007">Acetylation</keyword>
<keyword id="KW-0025">Alternative splicing</keyword>
<keyword id="KW-0903">Direct protein sequencing</keyword>
<keyword id="KW-0472">Membrane</keyword>
<keyword id="KW-0488">Methylation</keyword>
<keyword id="KW-0496">Mitochondrion</keyword>
<keyword id="KW-0999">Mitochondrion inner membrane</keyword>
<keyword id="KW-0597">Phosphoprotein</keyword>
<keyword id="KW-1185">Reference proteome</keyword>
<keyword id="KW-0677">Repeat</keyword>
<keyword id="KW-0769">Symport</keyword>
<keyword id="KW-0809">Transit peptide</keyword>
<keyword id="KW-0812">Transmembrane</keyword>
<keyword id="KW-1133">Transmembrane helix</keyword>
<keyword id="KW-0813">Transport</keyword>
<comment type="function">
    <text evidence="1 2 7">Inorganic ion transporter that transports phosphate or copper ions across the mitochondrial inner membrane into the matrix compartment (By similarity) (PubMed:9712911). Mediates proton-coupled symport of phosphate ions necessary for mitochondrial oxidative phosphorylation of ADP to ATP (PubMed:9712911). Transports copper ions probably in the form of anionic copper(I) complexes to maintain mitochondrial matrix copper pool and to supply copper for cytochrome C oxidase complex assembly (By similarity). May also play a role in regulation of the mitochondrial permeability transition pore (mPTP) (By similarity).</text>
</comment>
<comment type="catalytic activity">
    <molecule>Isoform A</molecule>
    <reaction evidence="7">
        <text>phosphate(in) + H(+)(in) = phosphate(out) + H(+)(out)</text>
        <dbReference type="Rhea" id="RHEA:29939"/>
        <dbReference type="ChEBI" id="CHEBI:15378"/>
        <dbReference type="ChEBI" id="CHEBI:43474"/>
    </reaction>
    <physiologicalReaction direction="right-to-left" evidence="11">
        <dbReference type="Rhea" id="RHEA:29941"/>
    </physiologicalReaction>
</comment>
<comment type="catalytic activity">
    <molecule>Isoform B</molecule>
    <reaction evidence="7">
        <text>phosphate(in) + H(+)(in) = phosphate(out) + H(+)(out)</text>
        <dbReference type="Rhea" id="RHEA:29939"/>
        <dbReference type="ChEBI" id="CHEBI:15378"/>
        <dbReference type="ChEBI" id="CHEBI:43474"/>
    </reaction>
    <physiologicalReaction direction="right-to-left" evidence="11">
        <dbReference type="Rhea" id="RHEA:29941"/>
    </physiologicalReaction>
</comment>
<comment type="activity regulation">
    <molecule>Isoform A</molecule>
    <text evidence="7">Up-regulated in the presence of cardiolipin.</text>
</comment>
<comment type="activity regulation">
    <molecule>Isoform B</molecule>
    <text evidence="7">Up-regulated in the presence of cardiolipin.</text>
</comment>
<comment type="biophysicochemical properties">
    <molecule>Isoform A</molecule>
    <kinetics>
        <KM evidence="7">8.1 mM for phosphate</KM>
    </kinetics>
</comment>
<comment type="biophysicochemical properties">
    <molecule>Isoform B</molecule>
    <kinetics>
        <KM evidence="7">7 mM for phosphate</KM>
    </kinetics>
</comment>
<comment type="subunit">
    <text evidence="1">Interacts with PPIF; the interaction is impaired by CsA.</text>
</comment>
<comment type="subcellular location">
    <subcellularLocation>
        <location evidence="5">Mitochondrion inner membrane</location>
        <topology evidence="5">Multi-pass membrane protein</topology>
    </subcellularLocation>
</comment>
<comment type="alternative products">
    <event type="alternative splicing"/>
    <isoform>
        <id>P12234-1</id>
        <name>A</name>
        <name evidence="8">PiC-A</name>
        <sequence type="displayed"/>
    </isoform>
    <isoform>
        <id>P12234-2</id>
        <name>B</name>
        <name evidence="8">PiC-B</name>
        <sequence type="described" ref="VSP_003268"/>
    </isoform>
</comment>
<comment type="tissue specificity">
    <molecule>Isoform A</molecule>
    <text evidence="7">Expressed in heart, diaphragm and skeletal muscle (at protein level). Not detected in liver, lung, brain, and kidney (at protein level).</text>
</comment>
<comment type="tissue specificity">
    <molecule>Isoform B</molecule>
    <text evidence="7">Ubiquitous (at protein level).</text>
</comment>
<comment type="similarity">
    <text evidence="10">Belongs to the mitochondrial carrier (TC 2.A.29) family.</text>
</comment>
<reference key="1">
    <citation type="journal article" date="1994" name="J. Biol. Chem.">
        <title>The sequences of human and bovine genes of the phosphate carrier from mitochondria contain evidence of alternatively spliced forms.</title>
        <authorList>
            <person name="Dolce V."/>
            <person name="Iacobazzi V."/>
            <person name="Palmieri F."/>
            <person name="Walker J.E."/>
        </authorList>
    </citation>
    <scope>NUCLEOTIDE SEQUENCE [GENOMIC DNA]</scope>
    <scope>ALTERNATIVE SPLICING</scope>
    <source>
        <tissue>Liver</tissue>
    </source>
</reference>
<reference key="2">
    <citation type="journal article" date="1987" name="EMBO J.">
        <title>Sequence of the bovine mitochondrial phosphate carrier protein: structural relationship to ADP/ATP translocase and the brown fat mitochondria uncoupling protein.</title>
        <authorList>
            <person name="Runswick M.J."/>
            <person name="Powell S.J."/>
            <person name="Nyren P."/>
            <person name="Walker J.E."/>
        </authorList>
    </citation>
    <scope>NUCLEOTIDE SEQUENCE [MRNA] (ISOFORM A)</scope>
</reference>
<reference key="3">
    <citation type="submission" date="2007-07" db="EMBL/GenBank/DDBJ databases">
        <authorList>
            <consortium name="NIH - Mammalian Gene Collection (MGC) project"/>
        </authorList>
    </citation>
    <scope>NUCLEOTIDE SEQUENCE [LARGE SCALE MRNA] (ISOFORM B)</scope>
    <source>
        <strain>Hereford</strain>
        <tissue>Hypothalamus</tissue>
    </source>
</reference>
<reference key="4">
    <citation type="journal article" date="1985" name="J. Biol. Chem.">
        <title>Sequence of the N-terminal formic acid fragment and location of the N-ethylmaleimide-binding site of the phosphate transport protein from beef heart mitochondria.</title>
        <authorList>
            <person name="Kolbe H.V.J."/>
            <person name="Wohlrab H."/>
        </authorList>
    </citation>
    <scope>PROTEIN SEQUENCE OF 50-96</scope>
</reference>
<reference key="5">
    <citation type="journal article" date="1991" name="Biochemistry">
        <title>Transmembrane topography of the mitochondrial phosphate carrier explored by peptide-specific antibodies and enzymatic digestion.</title>
        <authorList>
            <person name="Capobianco L."/>
            <person name="Brandolin G."/>
            <person name="Palmieri F."/>
        </authorList>
    </citation>
    <scope>SUBCELLULAR LOCATION</scope>
    <scope>MEMBRANE TOPOLOGY</scope>
</reference>
<reference key="6">
    <citation type="journal article" date="1998" name="J. Biol. Chem.">
        <title>Expression in Escherichia coli, functional characterization, and tissue distribution of isoforms A and B of the phosphate carrier from bovine mitochondria.</title>
        <authorList>
            <person name="Fiermonte G."/>
            <person name="Dolce V."/>
            <person name="Palmieri F."/>
        </authorList>
    </citation>
    <scope>FUNCTION</scope>
    <scope>TRANSPORTER ACTIVITY (ISOFORMS A AND B)</scope>
    <scope>BIOPHYSICOCHEMICAL PROPERTIES (ISOFORMS A AND B)</scope>
    <scope>ACTIVITY REGULATION (ISOFORMS A AND B)</scope>
    <scope>TISSUE SPECIFICITY (ISOFORMS A AND B)</scope>
</reference>
<feature type="transit peptide" description="Mitochondrion" evidence="6">
    <location>
        <begin position="1"/>
        <end position="49"/>
    </location>
</feature>
<feature type="chain" id="PRO_0000019255" description="Solute carrier family 25 member 3">
    <location>
        <begin position="50"/>
        <end position="362"/>
    </location>
</feature>
<feature type="topological domain" description="Mitochondrial intermembrane" evidence="4">
    <location>
        <begin position="50"/>
        <end position="63"/>
    </location>
</feature>
<feature type="transmembrane region" description="Helical; Name=1" evidence="4">
    <location>
        <begin position="64"/>
        <end position="86"/>
    </location>
</feature>
<feature type="topological domain" description="Mitochondrial matrix" evidence="4">
    <location>
        <begin position="87"/>
        <end position="121"/>
    </location>
</feature>
<feature type="transmembrane region" description="Helical; Name=2" evidence="4">
    <location>
        <begin position="122"/>
        <end position="141"/>
    </location>
</feature>
<feature type="topological domain" description="Mitochondrial intermembrane" evidence="4">
    <location>
        <begin position="142"/>
        <end position="161"/>
    </location>
</feature>
<feature type="transmembrane region" description="Helical; Name=3" evidence="4">
    <location>
        <begin position="162"/>
        <end position="183"/>
    </location>
</feature>
<feature type="topological domain" description="Mitochondrial matrix" evidence="4">
    <location>
        <begin position="184"/>
        <end position="218"/>
    </location>
</feature>
<feature type="transmembrane region" description="Helical; Name=4" evidence="4">
    <location>
        <begin position="219"/>
        <end position="238"/>
    </location>
</feature>
<feature type="topological domain" description="Mitochondrial intermembrane" evidence="4">
    <location>
        <begin position="239"/>
        <end position="261"/>
    </location>
</feature>
<feature type="transmembrane region" description="Helical; Name=5" evidence="4">
    <location>
        <begin position="262"/>
        <end position="284"/>
    </location>
</feature>
<feature type="topological domain" description="Mitochondrial matrix" evidence="4">
    <location>
        <begin position="285"/>
        <end position="314"/>
    </location>
</feature>
<feature type="transmembrane region" description="Helical; Name=6" evidence="4">
    <location>
        <begin position="315"/>
        <end position="333"/>
    </location>
</feature>
<feature type="topological domain" description="Mitochondrial intermembrane" evidence="4">
    <location>
        <begin position="334"/>
        <end position="362"/>
    </location>
</feature>
<feature type="repeat" description="Solcar 1">
    <location>
        <begin position="63"/>
        <end position="147"/>
    </location>
</feature>
<feature type="repeat" description="Solcar 2">
    <location>
        <begin position="160"/>
        <end position="244"/>
    </location>
</feature>
<feature type="repeat" description="Solcar 3">
    <location>
        <begin position="261"/>
        <end position="339"/>
    </location>
</feature>
<feature type="modified residue" description="N6-acetyllysine" evidence="2">
    <location>
        <position position="99"/>
    </location>
</feature>
<feature type="modified residue" description="N6-methyllysine" evidence="2">
    <location>
        <position position="112"/>
    </location>
</feature>
<feature type="modified residue" description="Phosphotyrosine" evidence="2">
    <location>
        <position position="196"/>
    </location>
</feature>
<feature type="modified residue" description="N6-acetyllysine" evidence="3">
    <location>
        <position position="209"/>
    </location>
</feature>
<feature type="splice variant" id="VSP_003268" description="In isoform B." evidence="9">
    <original>QYSCDYGSGRFFILCGLGGIISCGTTHTAL</original>
    <variation>YSCEYGSAKFYALCGFGGVLSCGLTHTAV</variation>
    <location>
        <begin position="54"/>
        <end position="83"/>
    </location>
</feature>
<dbReference type="EMBL" id="X77338">
    <property type="status" value="NOT_ANNOTATED_CDS"/>
    <property type="molecule type" value="Genomic_DNA"/>
</dbReference>
<dbReference type="EMBL" id="X05340">
    <property type="protein sequence ID" value="CAA28951.1"/>
    <property type="molecule type" value="mRNA"/>
</dbReference>
<dbReference type="EMBL" id="BC149996">
    <property type="protein sequence ID" value="AAI49997.1"/>
    <property type="molecule type" value="mRNA"/>
</dbReference>
<dbReference type="PIR" id="C53737">
    <property type="entry name" value="C53737"/>
</dbReference>
<dbReference type="PIR" id="D53737">
    <property type="entry name" value="D53737"/>
</dbReference>
<dbReference type="RefSeq" id="NP_777082.1">
    <molecule id="P12234-1"/>
    <property type="nucleotide sequence ID" value="NM_174657.2"/>
</dbReference>
<dbReference type="RefSeq" id="XP_005206570.1">
    <molecule id="P12234-2"/>
    <property type="nucleotide sequence ID" value="XM_005206513.4"/>
</dbReference>
<dbReference type="SMR" id="P12234"/>
<dbReference type="BioGRID" id="159730">
    <property type="interactions" value="1"/>
</dbReference>
<dbReference type="FunCoup" id="P12234">
    <property type="interactions" value="2947"/>
</dbReference>
<dbReference type="STRING" id="9913.ENSBTAP00000017131"/>
<dbReference type="TCDB" id="2.A.29.4.1">
    <property type="family name" value="the mitochondrial carrier (mc) family"/>
</dbReference>
<dbReference type="GlyGen" id="P12234">
    <property type="glycosylation" value="1 site, 1 O-linked glycan (1 site)"/>
</dbReference>
<dbReference type="PaxDb" id="9913-ENSBTAP00000017131"/>
<dbReference type="PeptideAtlas" id="P12234"/>
<dbReference type="Ensembl" id="ENSBTAT00000017131.6">
    <molecule id="P12234-1"/>
    <property type="protein sequence ID" value="ENSBTAP00000017131.5"/>
    <property type="gene ID" value="ENSBTAG00000012890.7"/>
</dbReference>
<dbReference type="Ensembl" id="ENSBTAT00000053663.3">
    <molecule id="P12234-2"/>
    <property type="protein sequence ID" value="ENSBTAP00000048807.2"/>
    <property type="gene ID" value="ENSBTAG00000012890.7"/>
</dbReference>
<dbReference type="GeneID" id="282477"/>
<dbReference type="KEGG" id="bta:282477"/>
<dbReference type="CTD" id="5250"/>
<dbReference type="VEuPathDB" id="HostDB:ENSBTAG00000012890"/>
<dbReference type="eggNOG" id="KOG0767">
    <property type="taxonomic scope" value="Eukaryota"/>
</dbReference>
<dbReference type="GeneTree" id="ENSGT00390000008708"/>
<dbReference type="HOGENOM" id="CLU_039456_3_1_1"/>
<dbReference type="InParanoid" id="P12234"/>
<dbReference type="OMA" id="YKGAIWL"/>
<dbReference type="OrthoDB" id="427452at2759"/>
<dbReference type="TreeFam" id="TF314119"/>
<dbReference type="Proteomes" id="UP000009136">
    <property type="component" value="Chromosome 5"/>
</dbReference>
<dbReference type="Bgee" id="ENSBTAG00000012890">
    <property type="expression patterns" value="Expressed in cardiac ventricle and 105 other cell types or tissues"/>
</dbReference>
<dbReference type="GO" id="GO:0005743">
    <property type="term" value="C:mitochondrial inner membrane"/>
    <property type="evidence" value="ECO:0000314"/>
    <property type="project" value="UniProtKB"/>
</dbReference>
<dbReference type="GO" id="GO:0005739">
    <property type="term" value="C:mitochondrion"/>
    <property type="evidence" value="ECO:0000250"/>
    <property type="project" value="AgBase"/>
</dbReference>
<dbReference type="GO" id="GO:0005315">
    <property type="term" value="F:phosphate transmembrane transporter activity"/>
    <property type="evidence" value="ECO:0000318"/>
    <property type="project" value="GO_Central"/>
</dbReference>
<dbReference type="GO" id="GO:0015317">
    <property type="term" value="F:phosphate:proton symporter activity"/>
    <property type="evidence" value="ECO:0000314"/>
    <property type="project" value="UniProtKB"/>
</dbReference>
<dbReference type="GO" id="GO:0044877">
    <property type="term" value="F:protein-containing complex binding"/>
    <property type="evidence" value="ECO:0007669"/>
    <property type="project" value="Ensembl"/>
</dbReference>
<dbReference type="GO" id="GO:0015293">
    <property type="term" value="F:symporter activity"/>
    <property type="evidence" value="ECO:0007669"/>
    <property type="project" value="UniProtKB-KW"/>
</dbReference>
<dbReference type="GO" id="GO:1990547">
    <property type="term" value="P:mitochondrial phosphate ion transmembrane transport"/>
    <property type="evidence" value="ECO:0007669"/>
    <property type="project" value="InterPro"/>
</dbReference>
<dbReference type="GO" id="GO:0035435">
    <property type="term" value="P:phosphate ion transmembrane transport"/>
    <property type="evidence" value="ECO:0000318"/>
    <property type="project" value="GO_Central"/>
</dbReference>
<dbReference type="FunFam" id="1.50.40.10:FF:000005">
    <property type="entry name" value="Mitochondrial phosphate carrier protein 2"/>
    <property type="match status" value="1"/>
</dbReference>
<dbReference type="Gene3D" id="1.50.40.10">
    <property type="entry name" value="Mitochondrial carrier domain"/>
    <property type="match status" value="1"/>
</dbReference>
<dbReference type="InterPro" id="IPR018108">
    <property type="entry name" value="Mitochondrial_sb/sol_carrier"/>
</dbReference>
<dbReference type="InterPro" id="IPR023395">
    <property type="entry name" value="Mt_carrier_dom_sf"/>
</dbReference>
<dbReference type="InterPro" id="IPR044677">
    <property type="entry name" value="SLC25A3/Pic2/Mir1-like"/>
</dbReference>
<dbReference type="PANTHER" id="PTHR45671">
    <property type="entry name" value="SOLUTE CARRIER FAMILY 25 (MITOCHONDRIAL CARRIER PHOSPHATE CARRIER), MEMBER 3, LIKE-RELATED-RELATED"/>
    <property type="match status" value="1"/>
</dbReference>
<dbReference type="PANTHER" id="PTHR45671:SF2">
    <property type="entry name" value="SOLUTE CARRIER FAMILY 25 MEMBER 3"/>
    <property type="match status" value="1"/>
</dbReference>
<dbReference type="Pfam" id="PF00153">
    <property type="entry name" value="Mito_carr"/>
    <property type="match status" value="3"/>
</dbReference>
<dbReference type="SUPFAM" id="SSF103506">
    <property type="entry name" value="Mitochondrial carrier"/>
    <property type="match status" value="1"/>
</dbReference>
<dbReference type="PROSITE" id="PS50920">
    <property type="entry name" value="SOLCAR"/>
    <property type="match status" value="3"/>
</dbReference>
<gene>
    <name evidence="2" type="primary">SLC25A3</name>
    <name type="synonym">PHC</name>
</gene>
<name>S25A3_BOVIN</name>
<sequence>MYSSVVHLARANPFNAPHLQLVHDGLAGPRSDPAGPPGPPRRSRNLAAAAVEEQYSCDYGSGRFFILCGLGGIISCGTTHTALVPLDLVKCRMQVDPQKYKSIFNGFSVTLKEDGFRGLAKGWAPTFIGYSLQGLCKFGFYEVFKVLYSNMLGEENAYLWRTSLYLAASASAEFFADIALAPMEAAKVRIQTQPGYANTLRDAAPKMYKEEGLKAFYKGVAPLWMRQIPYTMMKFACFERTVEALYKFVVPKPRSECSKPEQLVVTFVAGYIAGVFCAIVSHPADSVVSVLNKEKGSSASEVLKRLGFRGVWKGLFARIIMIGTLTALQWFIYDSVKVYFRLPRPPPPEMPESLKKKLGYTQ</sequence>
<protein>
    <recommendedName>
        <fullName evidence="2">Solute carrier family 25 member 3</fullName>
    </recommendedName>
    <alternativeName>
        <fullName evidence="8">Phosphate carrier protein, mitochondrial</fullName>
        <shortName evidence="8">PiC</shortName>
    </alternativeName>
    <alternativeName>
        <fullName>Phosphate transport protein</fullName>
        <shortName>PTP</shortName>
    </alternativeName>
</protein>
<organism>
    <name type="scientific">Bos taurus</name>
    <name type="common">Bovine</name>
    <dbReference type="NCBI Taxonomy" id="9913"/>
    <lineage>
        <taxon>Eukaryota</taxon>
        <taxon>Metazoa</taxon>
        <taxon>Chordata</taxon>
        <taxon>Craniata</taxon>
        <taxon>Vertebrata</taxon>
        <taxon>Euteleostomi</taxon>
        <taxon>Mammalia</taxon>
        <taxon>Eutheria</taxon>
        <taxon>Laurasiatheria</taxon>
        <taxon>Artiodactyla</taxon>
        <taxon>Ruminantia</taxon>
        <taxon>Pecora</taxon>
        <taxon>Bovidae</taxon>
        <taxon>Bovinae</taxon>
        <taxon>Bos</taxon>
    </lineage>
</organism>
<accession>P12234</accession>
<accession>A6QQU5</accession>